<protein>
    <recommendedName>
        <fullName evidence="1">Cytochrome b559 subunit beta</fullName>
    </recommendedName>
    <alternativeName>
        <fullName evidence="1">PSII reaction center subunit VI</fullName>
    </alternativeName>
</protein>
<evidence type="ECO:0000255" key="1">
    <source>
        <dbReference type="HAMAP-Rule" id="MF_00643"/>
    </source>
</evidence>
<accession>Q7J1B7</accession>
<gene>
    <name evidence="1" type="primary">psbF</name>
</gene>
<feature type="chain" id="PRO_0000200371" description="Cytochrome b559 subunit beta">
    <location>
        <begin position="1"/>
        <end position="39"/>
    </location>
</feature>
<feature type="transmembrane region" description="Helical" evidence="1">
    <location>
        <begin position="14"/>
        <end position="30"/>
    </location>
</feature>
<feature type="binding site" description="axial binding residue" evidence="1">
    <location>
        <position position="18"/>
    </location>
    <ligand>
        <name>heme</name>
        <dbReference type="ChEBI" id="CHEBI:30413"/>
        <note>ligand shared with alpha subunit</note>
    </ligand>
    <ligandPart>
        <name>Fe</name>
        <dbReference type="ChEBI" id="CHEBI:18248"/>
    </ligandPart>
</feature>
<reference key="1">
    <citation type="journal article" date="2000" name="Am. J. Bot.">
        <title>Utility of 17 chloroplast genes for inferring the phylogeny of the basal angiosperms.</title>
        <authorList>
            <person name="Graham S.W."/>
            <person name="Olmstead R.G."/>
        </authorList>
    </citation>
    <scope>NUCLEOTIDE SEQUENCE [GENOMIC DNA]</scope>
</reference>
<organism>
    <name type="scientific">Cercidiphyllum japonicum</name>
    <name type="common">Katsura tree</name>
    <dbReference type="NCBI Taxonomy" id="13413"/>
    <lineage>
        <taxon>Eukaryota</taxon>
        <taxon>Viridiplantae</taxon>
        <taxon>Streptophyta</taxon>
        <taxon>Embryophyta</taxon>
        <taxon>Tracheophyta</taxon>
        <taxon>Spermatophyta</taxon>
        <taxon>Magnoliopsida</taxon>
        <taxon>eudicotyledons</taxon>
        <taxon>Gunneridae</taxon>
        <taxon>Pentapetalae</taxon>
        <taxon>Saxifragales</taxon>
        <taxon>Cercidiphyllaceae</taxon>
        <taxon>Cercidiphyllum</taxon>
    </lineage>
</organism>
<name>PSBF_CERJA</name>
<comment type="function">
    <text evidence="1">This b-type cytochrome is tightly associated with the reaction center of photosystem II (PSII). PSII is a light-driven water:plastoquinone oxidoreductase that uses light energy to abstract electrons from H(2)O, generating O(2) and a proton gradient subsequently used for ATP formation. It consists of a core antenna complex that captures photons, and an electron transfer chain that converts photonic excitation into a charge separation.</text>
</comment>
<comment type="cofactor">
    <cofactor evidence="1">
        <name>heme b</name>
        <dbReference type="ChEBI" id="CHEBI:60344"/>
    </cofactor>
    <text evidence="1">With its partner (PsbE) binds heme. PSII binds additional chlorophylls, carotenoids and specific lipids.</text>
</comment>
<comment type="subunit">
    <text evidence="1">Heterodimer of an alpha subunit and a beta subunit. PSII is composed of 1 copy each of membrane proteins PsbA, PsbB, PsbC, PsbD, PsbE, PsbF, PsbH, PsbI, PsbJ, PsbK, PsbL, PsbM, PsbT, PsbX, PsbY, PsbZ, Psb30/Ycf12, at least 3 peripheral proteins of the oxygen-evolving complex and a large number of cofactors. It forms dimeric complexes.</text>
</comment>
<comment type="subcellular location">
    <subcellularLocation>
        <location evidence="1">Plastid</location>
        <location evidence="1">Chloroplast thylakoid membrane</location>
        <topology evidence="1">Single-pass membrane protein</topology>
    </subcellularLocation>
</comment>
<comment type="similarity">
    <text evidence="1">Belongs to the PsbE/PsbF family.</text>
</comment>
<sequence length="39" mass="4424">MTIDRTYPIFTVRWLAVHGLAVPTVSFLGSISAMQFIQR</sequence>
<geneLocation type="chloroplast"/>
<proteinExistence type="inferred from homology"/>
<keyword id="KW-0150">Chloroplast</keyword>
<keyword id="KW-0249">Electron transport</keyword>
<keyword id="KW-0349">Heme</keyword>
<keyword id="KW-0408">Iron</keyword>
<keyword id="KW-0472">Membrane</keyword>
<keyword id="KW-0479">Metal-binding</keyword>
<keyword id="KW-0602">Photosynthesis</keyword>
<keyword id="KW-0604">Photosystem II</keyword>
<keyword id="KW-0934">Plastid</keyword>
<keyword id="KW-0793">Thylakoid</keyword>
<keyword id="KW-0812">Transmembrane</keyword>
<keyword id="KW-1133">Transmembrane helix</keyword>
<keyword id="KW-0813">Transport</keyword>
<dbReference type="EMBL" id="AF123833">
    <property type="protein sequence ID" value="AAG26211.1"/>
    <property type="molecule type" value="Genomic_DNA"/>
</dbReference>
<dbReference type="RefSeq" id="YP_009493288.1">
    <property type="nucleotide sequence ID" value="NC_037940.1"/>
</dbReference>
<dbReference type="SMR" id="Q7J1B7"/>
<dbReference type="GeneID" id="36953555"/>
<dbReference type="GO" id="GO:0009535">
    <property type="term" value="C:chloroplast thylakoid membrane"/>
    <property type="evidence" value="ECO:0007669"/>
    <property type="project" value="UniProtKB-SubCell"/>
</dbReference>
<dbReference type="GO" id="GO:0009539">
    <property type="term" value="C:photosystem II reaction center"/>
    <property type="evidence" value="ECO:0007669"/>
    <property type="project" value="InterPro"/>
</dbReference>
<dbReference type="GO" id="GO:0009055">
    <property type="term" value="F:electron transfer activity"/>
    <property type="evidence" value="ECO:0007669"/>
    <property type="project" value="UniProtKB-UniRule"/>
</dbReference>
<dbReference type="GO" id="GO:0020037">
    <property type="term" value="F:heme binding"/>
    <property type="evidence" value="ECO:0007669"/>
    <property type="project" value="InterPro"/>
</dbReference>
<dbReference type="GO" id="GO:0005506">
    <property type="term" value="F:iron ion binding"/>
    <property type="evidence" value="ECO:0007669"/>
    <property type="project" value="UniProtKB-UniRule"/>
</dbReference>
<dbReference type="GO" id="GO:0009767">
    <property type="term" value="P:photosynthetic electron transport chain"/>
    <property type="evidence" value="ECO:0007669"/>
    <property type="project" value="InterPro"/>
</dbReference>
<dbReference type="HAMAP" id="MF_00643">
    <property type="entry name" value="PSII_PsbF"/>
    <property type="match status" value="1"/>
</dbReference>
<dbReference type="InterPro" id="IPR006241">
    <property type="entry name" value="PSII_cyt_b559_bsu"/>
</dbReference>
<dbReference type="InterPro" id="IPR006216">
    <property type="entry name" value="PSII_cyt_b559_CS"/>
</dbReference>
<dbReference type="InterPro" id="IPR013081">
    <property type="entry name" value="PSII_cyt_b559_N"/>
</dbReference>
<dbReference type="NCBIfam" id="TIGR01333">
    <property type="entry name" value="cyt_b559_beta"/>
    <property type="match status" value="1"/>
</dbReference>
<dbReference type="Pfam" id="PF00283">
    <property type="entry name" value="Cytochrom_B559"/>
    <property type="match status" value="1"/>
</dbReference>
<dbReference type="PIRSF" id="PIRSF000037">
    <property type="entry name" value="PsbF"/>
    <property type="match status" value="1"/>
</dbReference>
<dbReference type="SUPFAM" id="SSF161045">
    <property type="entry name" value="Cytochrome b559 subunits"/>
    <property type="match status" value="1"/>
</dbReference>
<dbReference type="PROSITE" id="PS00537">
    <property type="entry name" value="CYTOCHROME_B559"/>
    <property type="match status" value="1"/>
</dbReference>